<dbReference type="EMBL" id="X14035">
    <property type="protein sequence ID" value="CAA32196.1"/>
    <property type="molecule type" value="Genomic_DNA"/>
</dbReference>
<dbReference type="EMBL" id="M34933">
    <property type="protein sequence ID" value="AAA98409.1"/>
    <property type="molecule type" value="Genomic_DNA"/>
</dbReference>
<dbReference type="PIR" id="I77569">
    <property type="entry name" value="I77569"/>
</dbReference>
<dbReference type="SMR" id="P21337"/>
<dbReference type="GO" id="GO:0003677">
    <property type="term" value="F:DNA binding"/>
    <property type="evidence" value="ECO:0007669"/>
    <property type="project" value="UniProtKB-KW"/>
</dbReference>
<dbReference type="GO" id="GO:0046872">
    <property type="term" value="F:metal ion binding"/>
    <property type="evidence" value="ECO:0007669"/>
    <property type="project" value="UniProtKB-KW"/>
</dbReference>
<dbReference type="GO" id="GO:0045892">
    <property type="term" value="P:negative regulation of DNA-templated transcription"/>
    <property type="evidence" value="ECO:0007669"/>
    <property type="project" value="InterPro"/>
</dbReference>
<dbReference type="GO" id="GO:0046677">
    <property type="term" value="P:response to antibiotic"/>
    <property type="evidence" value="ECO:0007669"/>
    <property type="project" value="UniProtKB-KW"/>
</dbReference>
<dbReference type="Gene3D" id="1.10.10.60">
    <property type="entry name" value="Homeodomain-like"/>
    <property type="match status" value="1"/>
</dbReference>
<dbReference type="Gene3D" id="1.10.357.10">
    <property type="entry name" value="Tetracycline Repressor, domain 2"/>
    <property type="match status" value="1"/>
</dbReference>
<dbReference type="InterPro" id="IPR023772">
    <property type="entry name" value="DNA-bd_HTH_TetR-type_CS"/>
</dbReference>
<dbReference type="InterPro" id="IPR009057">
    <property type="entry name" value="Homeodomain-like_sf"/>
</dbReference>
<dbReference type="InterPro" id="IPR001647">
    <property type="entry name" value="HTH_TetR"/>
</dbReference>
<dbReference type="InterPro" id="IPR004111">
    <property type="entry name" value="Repressor_TetR_C"/>
</dbReference>
<dbReference type="InterPro" id="IPR003012">
    <property type="entry name" value="Tet_transcr_reg_TetR"/>
</dbReference>
<dbReference type="InterPro" id="IPR036271">
    <property type="entry name" value="Tet_transcr_reg_TetR-rel_C_sf"/>
</dbReference>
<dbReference type="NCBIfam" id="NF010319">
    <property type="entry name" value="PRK13756.1"/>
    <property type="match status" value="1"/>
</dbReference>
<dbReference type="Pfam" id="PF02909">
    <property type="entry name" value="TetR_C_1"/>
    <property type="match status" value="1"/>
</dbReference>
<dbReference type="Pfam" id="PF00440">
    <property type="entry name" value="TetR_N"/>
    <property type="match status" value="1"/>
</dbReference>
<dbReference type="PRINTS" id="PR00455">
    <property type="entry name" value="HTHTETR"/>
</dbReference>
<dbReference type="PRINTS" id="PR00400">
    <property type="entry name" value="TETREPRESSOR"/>
</dbReference>
<dbReference type="SUPFAM" id="SSF46689">
    <property type="entry name" value="Homeodomain-like"/>
    <property type="match status" value="1"/>
</dbReference>
<dbReference type="SUPFAM" id="SSF48498">
    <property type="entry name" value="Tetracyclin repressor-like, C-terminal domain"/>
    <property type="match status" value="1"/>
</dbReference>
<dbReference type="PROSITE" id="PS01081">
    <property type="entry name" value="HTH_TETR_1"/>
    <property type="match status" value="1"/>
</dbReference>
<dbReference type="PROSITE" id="PS50977">
    <property type="entry name" value="HTH_TETR_2"/>
    <property type="match status" value="1"/>
</dbReference>
<evidence type="ECO:0000250" key="1">
    <source>
        <dbReference type="UniProtKB" id="P0ACT4"/>
    </source>
</evidence>
<evidence type="ECO:0000255" key="2">
    <source>
        <dbReference type="PROSITE-ProRule" id="PRU00335"/>
    </source>
</evidence>
<evidence type="ECO:0000305" key="3"/>
<proteinExistence type="evidence at protein level"/>
<geneLocation type="plasmid">
    <name>pSL1503</name>
</geneLocation>
<sequence>MARLSLDDVISMALTLLDSEGLEGLTTRKLAQSLKIEQPTLYWHVRNKQTLMNMLSEAILAKHHTRSAPLPTESWQQFLQENALSFRKALLVHRDGARLHIGTSPTPPQFEQAEAQLRCLCDAGFSVEEALFILQSISHFTLGAVLEEQATNQIENNHVIDAAPPLLQEAFNIQARTSAEMAFHFGLKSLIFGFSAQLDEKKHTPIEDGNK</sequence>
<gene>
    <name type="primary">tetR</name>
</gene>
<reference key="1">
    <citation type="journal article" date="1988" name="Mol. Gen. Genet.">
        <title>Identification and nucleotide sequence of the class E tet regulatory elements and operator and inducer binding of the encoded purified Tet repressor.</title>
        <authorList>
            <person name="Tovar K."/>
            <person name="Ernst A."/>
            <person name="Hillen W."/>
        </authorList>
    </citation>
    <scope>NUCLEOTIDE SEQUENCE [GENOMIC DNA]</scope>
    <scope>PROTEIN SEQUENCE OF 1-21</scope>
</reference>
<protein>
    <recommendedName>
        <fullName>Tetracycline repressor protein class E</fullName>
    </recommendedName>
</protein>
<feature type="chain" id="PRO_0000070617" description="Tetracycline repressor protein class E">
    <location>
        <begin position="1"/>
        <end position="211"/>
    </location>
</feature>
<feature type="domain" description="HTH tetR-type" evidence="2">
    <location>
        <begin position="3"/>
        <end position="63"/>
    </location>
</feature>
<feature type="DNA-binding region" description="H-T-H motif" evidence="2">
    <location>
        <begin position="26"/>
        <end position="45"/>
    </location>
</feature>
<feature type="binding site" evidence="1">
    <location>
        <position position="64"/>
    </location>
    <ligand>
        <name>tetracycline</name>
        <dbReference type="ChEBI" id="CHEBI:77932"/>
    </ligand>
</feature>
<feature type="binding site" evidence="1">
    <location>
        <position position="82"/>
    </location>
    <ligand>
        <name>tetracycline</name>
        <dbReference type="ChEBI" id="CHEBI:77932"/>
    </ligand>
</feature>
<feature type="binding site" evidence="1">
    <location>
        <position position="100"/>
    </location>
    <ligand>
        <name>Mg(2+)</name>
        <dbReference type="ChEBI" id="CHEBI:18420"/>
    </ligand>
</feature>
<feature type="sequence conflict" description="In Ref. 1; AAA98409." evidence="3" ref="1">
    <original>V</original>
    <variation>L</variation>
    <location>
        <position position="45"/>
    </location>
</feature>
<comment type="function">
    <text>TetR is the repressor of the tetracycline resistance element; its N-terminal region forms a helix-turn-helix structure and binds DNA. Binding of tetracycline to TetR reduces the repressor affinity for the tetracycline resistance gene (tetA) promoter operator sites.</text>
</comment>
<keyword id="KW-0046">Antibiotic resistance</keyword>
<keyword id="KW-0903">Direct protein sequencing</keyword>
<keyword id="KW-0238">DNA-binding</keyword>
<keyword id="KW-0460">Magnesium</keyword>
<keyword id="KW-0479">Metal-binding</keyword>
<keyword id="KW-0614">Plasmid</keyword>
<keyword id="KW-0678">Repressor</keyword>
<keyword id="KW-0804">Transcription</keyword>
<keyword id="KW-0805">Transcription regulation</keyword>
<name>TETR5_ECOLX</name>
<organism>
    <name type="scientific">Escherichia coli</name>
    <dbReference type="NCBI Taxonomy" id="562"/>
    <lineage>
        <taxon>Bacteria</taxon>
        <taxon>Pseudomonadati</taxon>
        <taxon>Pseudomonadota</taxon>
        <taxon>Gammaproteobacteria</taxon>
        <taxon>Enterobacterales</taxon>
        <taxon>Enterobacteriaceae</taxon>
        <taxon>Escherichia</taxon>
    </lineage>
</organism>
<accession>P21337</accession>